<dbReference type="EMBL" id="CR380951">
    <property type="protein sequence ID" value="CAG58841.1"/>
    <property type="molecule type" value="Genomic_DNA"/>
</dbReference>
<dbReference type="RefSeq" id="XP_445922.1">
    <property type="nucleotide sequence ID" value="XM_445922.1"/>
</dbReference>
<dbReference type="SMR" id="Q6FV22"/>
<dbReference type="FunCoup" id="Q6FV22">
    <property type="interactions" value="386"/>
</dbReference>
<dbReference type="STRING" id="284593.Q6FV22"/>
<dbReference type="EnsemblFungi" id="CAGL0E05368g-T">
    <property type="protein sequence ID" value="CAGL0E05368g-T-p1"/>
    <property type="gene ID" value="CAGL0E05368g"/>
</dbReference>
<dbReference type="KEGG" id="cgr:2887323"/>
<dbReference type="CGD" id="CAL0128950">
    <property type="gene designation" value="CAGL0E05368g"/>
</dbReference>
<dbReference type="VEuPathDB" id="FungiDB:CAGL0E05368g"/>
<dbReference type="eggNOG" id="KOG2662">
    <property type="taxonomic scope" value="Eukaryota"/>
</dbReference>
<dbReference type="HOGENOM" id="CLU_025144_1_0_1"/>
<dbReference type="InParanoid" id="Q6FV22"/>
<dbReference type="OMA" id="TLLIHMF"/>
<dbReference type="Proteomes" id="UP000002428">
    <property type="component" value="Chromosome E"/>
</dbReference>
<dbReference type="GO" id="GO:0005743">
    <property type="term" value="C:mitochondrial inner membrane"/>
    <property type="evidence" value="ECO:0000250"/>
    <property type="project" value="UniProtKB"/>
</dbReference>
<dbReference type="GO" id="GO:1901612">
    <property type="term" value="F:cardiolipin binding"/>
    <property type="evidence" value="ECO:0007669"/>
    <property type="project" value="EnsemblFungi"/>
</dbReference>
<dbReference type="GO" id="GO:0015095">
    <property type="term" value="F:magnesium ion transmembrane transporter activity"/>
    <property type="evidence" value="ECO:0000250"/>
    <property type="project" value="UniProtKB"/>
</dbReference>
<dbReference type="GO" id="GO:0045016">
    <property type="term" value="P:mitochondrial magnesium ion transmembrane transport"/>
    <property type="evidence" value="ECO:0000250"/>
    <property type="project" value="UniProtKB"/>
</dbReference>
<dbReference type="CDD" id="cd12823">
    <property type="entry name" value="Mrs2_Mfm1p-like"/>
    <property type="match status" value="1"/>
</dbReference>
<dbReference type="FunFam" id="1.20.58.340:FF:000005">
    <property type="entry name" value="Inner membrane magnesium transporter MRS2"/>
    <property type="match status" value="1"/>
</dbReference>
<dbReference type="FunFam" id="2.40.128.330:FF:000005">
    <property type="entry name" value="Magnesium transporter MRS2, mitochondrial"/>
    <property type="match status" value="1"/>
</dbReference>
<dbReference type="Gene3D" id="2.40.128.330">
    <property type="match status" value="1"/>
</dbReference>
<dbReference type="Gene3D" id="1.20.58.340">
    <property type="entry name" value="Magnesium transport protein CorA, transmembrane region"/>
    <property type="match status" value="1"/>
</dbReference>
<dbReference type="InterPro" id="IPR039204">
    <property type="entry name" value="MRS2-like"/>
</dbReference>
<dbReference type="PANTHER" id="PTHR13890:SF27">
    <property type="entry name" value="MAGNESIUM TRANSPORTER MRS2, MITOCHONDRIAL"/>
    <property type="match status" value="1"/>
</dbReference>
<dbReference type="PANTHER" id="PTHR13890">
    <property type="entry name" value="RNA SPLICING PROTEIN MRS2, MITOCHONDRIAL"/>
    <property type="match status" value="1"/>
</dbReference>
<dbReference type="Pfam" id="PF22099">
    <property type="entry name" value="MRS2-like"/>
    <property type="match status" value="1"/>
</dbReference>
<proteinExistence type="inferred from homology"/>
<comment type="function">
    <text evidence="1">High-conductance magnesium-selective channel that mediates the influx of magnesium into the mitochondrial matrix. Essential for the splicing of mRNA group II introns in mitochondria by affecting mitochondrial magnesium concentrations, which are critical for group II intron splicing. It also suppresses a variety of mitochondrial intron mutations and its absence may disturb the assembly of mitochondrial membrane complexes.</text>
</comment>
<comment type="subunit">
    <text evidence="1">Homopentamer. Forms homooligomers. Interacts with MFM1.</text>
</comment>
<comment type="subcellular location">
    <subcellularLocation>
        <location evidence="1">Mitochondrion inner membrane</location>
        <topology evidence="1">Multi-pass membrane protein</topology>
    </subcellularLocation>
</comment>
<comment type="similarity">
    <text evidence="3">Belongs to the CorA metal ion transporter (MIT) (TC 1.A.35) family.</text>
</comment>
<organism>
    <name type="scientific">Candida glabrata (strain ATCC 2001 / BCRC 20586 / JCM 3761 / NBRC 0622 / NRRL Y-65 / CBS 138)</name>
    <name type="common">Yeast</name>
    <name type="synonym">Nakaseomyces glabratus</name>
    <dbReference type="NCBI Taxonomy" id="284593"/>
    <lineage>
        <taxon>Eukaryota</taxon>
        <taxon>Fungi</taxon>
        <taxon>Dikarya</taxon>
        <taxon>Ascomycota</taxon>
        <taxon>Saccharomycotina</taxon>
        <taxon>Saccharomycetes</taxon>
        <taxon>Saccharomycetales</taxon>
        <taxon>Saccharomycetaceae</taxon>
        <taxon>Nakaseomyces</taxon>
    </lineage>
</organism>
<gene>
    <name type="primary">MRS2</name>
    <name type="ordered locus">CAGL0E05368g</name>
</gene>
<feature type="transit peptide" description="Mitochondrion" evidence="2">
    <location>
        <begin position="1"/>
        <end position="38"/>
    </location>
</feature>
<feature type="chain" id="PRO_0000043243" description="Mitochondrial inner membrane magnesium transporter MRS2">
    <location>
        <begin position="39"/>
        <end position="456"/>
    </location>
</feature>
<feature type="transmembrane region" description="Helical" evidence="2">
    <location>
        <begin position="326"/>
        <end position="346"/>
    </location>
</feature>
<feature type="transmembrane region" description="Helical" evidence="2">
    <location>
        <begin position="360"/>
        <end position="380"/>
    </location>
</feature>
<feature type="short sequence motif" description="YGMN">
    <location>
        <begin position="350"/>
        <end position="353"/>
    </location>
</feature>
<protein>
    <recommendedName>
        <fullName>Mitochondrial inner membrane magnesium transporter MRS2</fullName>
    </recommendedName>
    <alternativeName>
        <fullName>RNA-splicing protein MRS2</fullName>
    </alternativeName>
</protein>
<evidence type="ECO:0000250" key="1">
    <source>
        <dbReference type="UniProtKB" id="Q01926"/>
    </source>
</evidence>
<evidence type="ECO:0000255" key="2"/>
<evidence type="ECO:0000305" key="3"/>
<keyword id="KW-0406">Ion transport</keyword>
<keyword id="KW-0460">Magnesium</keyword>
<keyword id="KW-0472">Membrane</keyword>
<keyword id="KW-0496">Mitochondrion</keyword>
<keyword id="KW-0999">Mitochondrion inner membrane</keyword>
<keyword id="KW-1185">Reference proteome</keyword>
<keyword id="KW-0809">Transit peptide</keyword>
<keyword id="KW-0812">Transmembrane</keyword>
<keyword id="KW-1133">Transmembrane helix</keyword>
<keyword id="KW-0813">Transport</keyword>
<reference key="1">
    <citation type="journal article" date="2004" name="Nature">
        <title>Genome evolution in yeasts.</title>
        <authorList>
            <person name="Dujon B."/>
            <person name="Sherman D."/>
            <person name="Fischer G."/>
            <person name="Durrens P."/>
            <person name="Casaregola S."/>
            <person name="Lafontaine I."/>
            <person name="de Montigny J."/>
            <person name="Marck C."/>
            <person name="Neuveglise C."/>
            <person name="Talla E."/>
            <person name="Goffard N."/>
            <person name="Frangeul L."/>
            <person name="Aigle M."/>
            <person name="Anthouard V."/>
            <person name="Babour A."/>
            <person name="Barbe V."/>
            <person name="Barnay S."/>
            <person name="Blanchin S."/>
            <person name="Beckerich J.-M."/>
            <person name="Beyne E."/>
            <person name="Bleykasten C."/>
            <person name="Boisrame A."/>
            <person name="Boyer J."/>
            <person name="Cattolico L."/>
            <person name="Confanioleri F."/>
            <person name="de Daruvar A."/>
            <person name="Despons L."/>
            <person name="Fabre E."/>
            <person name="Fairhead C."/>
            <person name="Ferry-Dumazet H."/>
            <person name="Groppi A."/>
            <person name="Hantraye F."/>
            <person name="Hennequin C."/>
            <person name="Jauniaux N."/>
            <person name="Joyet P."/>
            <person name="Kachouri R."/>
            <person name="Kerrest A."/>
            <person name="Koszul R."/>
            <person name="Lemaire M."/>
            <person name="Lesur I."/>
            <person name="Ma L."/>
            <person name="Muller H."/>
            <person name="Nicaud J.-M."/>
            <person name="Nikolski M."/>
            <person name="Oztas S."/>
            <person name="Ozier-Kalogeropoulos O."/>
            <person name="Pellenz S."/>
            <person name="Potier S."/>
            <person name="Richard G.-F."/>
            <person name="Straub M.-L."/>
            <person name="Suleau A."/>
            <person name="Swennen D."/>
            <person name="Tekaia F."/>
            <person name="Wesolowski-Louvel M."/>
            <person name="Westhof E."/>
            <person name="Wirth B."/>
            <person name="Zeniou-Meyer M."/>
            <person name="Zivanovic Y."/>
            <person name="Bolotin-Fukuhara M."/>
            <person name="Thierry A."/>
            <person name="Bouchier C."/>
            <person name="Caudron B."/>
            <person name="Scarpelli C."/>
            <person name="Gaillardin C."/>
            <person name="Weissenbach J."/>
            <person name="Wincker P."/>
            <person name="Souciet J.-L."/>
        </authorList>
    </citation>
    <scope>NUCLEOTIDE SEQUENCE [LARGE SCALE GENOMIC DNA]</scope>
    <source>
        <strain>ATCC 2001 / BCRC 20586 / JCM 3761 / NBRC 0622 / NRRL Y-65 / CBS 138</strain>
    </source>
</reference>
<accession>Q6FV22</accession>
<sequence length="456" mass="52212">MRPLVRYRLIPWCLRQAVCQPVSKPIGYRLISTRGGNRSPQGKKTIPLLNKPESSNVGAFPSAHQQLLSLKPITPNDSFISSTVFDSKGAIVAVSKKFQKWEFLRKHALYPRDLRKIDTSSVDIIPSIQVKPNNCIVLNMLHIKALIEKDRVYVFDTVDPSSAVKLGVLMYDLESKLSPKMGTQVQYYEHRALESILINIMSSLEAEFKLHYSICGQILIDLENEVNRDKLRELLIKSKNLTLFYQKSLLIREVLDELLESDDDLASLYLTVKKTEEDDFSDLEMLLETYYTQCDEYVQQAESLIQDIKSTEEIVNIILDANRNSLMLLELKITIYTLGFTVATLVPAFYGMNLKNFIEESYLGFGAVVVFSILSAYLVTRANFKALKSVTKLTMLKSSNPSQASYNMKTNSTLRPALARIRGLFKWRKNPDSNGQPIWNKQDRDVIWKWLMDEKK</sequence>
<name>MRS2_CANGA</name>